<protein>
    <recommendedName>
        <fullName evidence="1">Large ribosomal subunit protein bL27</fullName>
    </recommendedName>
    <alternativeName>
        <fullName evidence="3">50S ribosomal protein L27</fullName>
    </alternativeName>
</protein>
<evidence type="ECO:0000255" key="1">
    <source>
        <dbReference type="HAMAP-Rule" id="MF_00539"/>
    </source>
</evidence>
<evidence type="ECO:0000256" key="2">
    <source>
        <dbReference type="SAM" id="MobiDB-lite"/>
    </source>
</evidence>
<evidence type="ECO:0000305" key="3"/>
<evidence type="ECO:0007829" key="4">
    <source>
        <dbReference type="PDB" id="8CVM"/>
    </source>
</evidence>
<name>RL27_CUTAK</name>
<dbReference type="EMBL" id="AE017283">
    <property type="protein sequence ID" value="AAT82584.1"/>
    <property type="molecule type" value="Genomic_DNA"/>
</dbReference>
<dbReference type="RefSeq" id="WP_002513859.1">
    <property type="nucleotide sequence ID" value="NZ_CP025935.1"/>
</dbReference>
<dbReference type="PDB" id="8CRX">
    <property type="method" value="EM"/>
    <property type="resolution" value="2.78 A"/>
    <property type="chains" value="v=1-89"/>
</dbReference>
<dbReference type="PDB" id="8CVM">
    <property type="method" value="EM"/>
    <property type="resolution" value="2.66 A"/>
    <property type="chains" value="v=1-89"/>
</dbReference>
<dbReference type="PDBsum" id="8CRX"/>
<dbReference type="PDBsum" id="8CVM"/>
<dbReference type="SMR" id="Q6A9I2"/>
<dbReference type="EnsemblBacteria" id="AAT82584">
    <property type="protein sequence ID" value="AAT82584"/>
    <property type="gene ID" value="PPA0829"/>
</dbReference>
<dbReference type="GeneID" id="92856809"/>
<dbReference type="KEGG" id="pac:PPA0829"/>
<dbReference type="eggNOG" id="COG0211">
    <property type="taxonomic scope" value="Bacteria"/>
</dbReference>
<dbReference type="HOGENOM" id="CLU_095424_4_0_11"/>
<dbReference type="Proteomes" id="UP000000603">
    <property type="component" value="Chromosome"/>
</dbReference>
<dbReference type="GO" id="GO:0022625">
    <property type="term" value="C:cytosolic large ribosomal subunit"/>
    <property type="evidence" value="ECO:0007669"/>
    <property type="project" value="TreeGrafter"/>
</dbReference>
<dbReference type="GO" id="GO:0003735">
    <property type="term" value="F:structural constituent of ribosome"/>
    <property type="evidence" value="ECO:0007669"/>
    <property type="project" value="InterPro"/>
</dbReference>
<dbReference type="GO" id="GO:0006412">
    <property type="term" value="P:translation"/>
    <property type="evidence" value="ECO:0007669"/>
    <property type="project" value="UniProtKB-UniRule"/>
</dbReference>
<dbReference type="FunFam" id="2.40.50.100:FF:000020">
    <property type="entry name" value="50S ribosomal protein L27"/>
    <property type="match status" value="1"/>
</dbReference>
<dbReference type="Gene3D" id="2.40.50.100">
    <property type="match status" value="1"/>
</dbReference>
<dbReference type="HAMAP" id="MF_00539">
    <property type="entry name" value="Ribosomal_bL27"/>
    <property type="match status" value="1"/>
</dbReference>
<dbReference type="InterPro" id="IPR001684">
    <property type="entry name" value="Ribosomal_bL27"/>
</dbReference>
<dbReference type="InterPro" id="IPR018261">
    <property type="entry name" value="Ribosomal_bL27_CS"/>
</dbReference>
<dbReference type="NCBIfam" id="TIGR00062">
    <property type="entry name" value="L27"/>
    <property type="match status" value="1"/>
</dbReference>
<dbReference type="PANTHER" id="PTHR15893:SF0">
    <property type="entry name" value="LARGE RIBOSOMAL SUBUNIT PROTEIN BL27M"/>
    <property type="match status" value="1"/>
</dbReference>
<dbReference type="PANTHER" id="PTHR15893">
    <property type="entry name" value="RIBOSOMAL PROTEIN L27"/>
    <property type="match status" value="1"/>
</dbReference>
<dbReference type="Pfam" id="PF01016">
    <property type="entry name" value="Ribosomal_L27"/>
    <property type="match status" value="1"/>
</dbReference>
<dbReference type="PRINTS" id="PR00063">
    <property type="entry name" value="RIBOSOMALL27"/>
</dbReference>
<dbReference type="SUPFAM" id="SSF110324">
    <property type="entry name" value="Ribosomal L27 protein-like"/>
    <property type="match status" value="1"/>
</dbReference>
<dbReference type="PROSITE" id="PS00831">
    <property type="entry name" value="RIBOSOMAL_L27"/>
    <property type="match status" value="1"/>
</dbReference>
<keyword id="KW-0002">3D-structure</keyword>
<keyword id="KW-0687">Ribonucleoprotein</keyword>
<keyword id="KW-0689">Ribosomal protein</keyword>
<sequence>MAHKKGASSSRNGRDSNAQRLGVKRFGGQLVNAGEIIVRQRGTHFHPGDGVGRGGDDTLFALRDGNVEFGTRRGRRVVNVTPVEAPVEA</sequence>
<organism>
    <name type="scientific">Cutibacterium acnes (strain DSM 16379 / KPA171202)</name>
    <name type="common">Propionibacterium acnes</name>
    <dbReference type="NCBI Taxonomy" id="267747"/>
    <lineage>
        <taxon>Bacteria</taxon>
        <taxon>Bacillati</taxon>
        <taxon>Actinomycetota</taxon>
        <taxon>Actinomycetes</taxon>
        <taxon>Propionibacteriales</taxon>
        <taxon>Propionibacteriaceae</taxon>
        <taxon>Cutibacterium</taxon>
    </lineage>
</organism>
<reference key="1">
    <citation type="journal article" date="2004" name="Science">
        <title>The complete genome sequence of Propionibacterium acnes, a commensal of human skin.</title>
        <authorList>
            <person name="Brueggemann H."/>
            <person name="Henne A."/>
            <person name="Hoster F."/>
            <person name="Liesegang H."/>
            <person name="Wiezer A."/>
            <person name="Strittmatter A."/>
            <person name="Hujer S."/>
            <person name="Duerre P."/>
            <person name="Gottschalk G."/>
        </authorList>
    </citation>
    <scope>NUCLEOTIDE SEQUENCE [LARGE SCALE GENOMIC DNA]</scope>
    <source>
        <strain>DSM 16379 / KPA171202</strain>
    </source>
</reference>
<accession>Q6A9I2</accession>
<comment type="similarity">
    <text evidence="1">Belongs to the bacterial ribosomal protein bL27 family.</text>
</comment>
<feature type="chain" id="PRO_0000181143" description="Large ribosomal subunit protein bL27">
    <location>
        <begin position="1"/>
        <end position="89"/>
    </location>
</feature>
<feature type="region of interest" description="Disordered" evidence="2">
    <location>
        <begin position="1"/>
        <end position="22"/>
    </location>
</feature>
<feature type="compositionally biased region" description="Polar residues" evidence="2">
    <location>
        <begin position="7"/>
        <end position="19"/>
    </location>
</feature>
<feature type="strand" evidence="4">
    <location>
        <begin position="22"/>
        <end position="25"/>
    </location>
</feature>
<feature type="strand" evidence="4">
    <location>
        <begin position="36"/>
        <end position="39"/>
    </location>
</feature>
<feature type="strand" evidence="4">
    <location>
        <begin position="44"/>
        <end position="47"/>
    </location>
</feature>
<feature type="strand" evidence="4">
    <location>
        <begin position="51"/>
        <end position="53"/>
    </location>
</feature>
<feature type="strand" evidence="4">
    <location>
        <begin position="59"/>
        <end position="72"/>
    </location>
</feature>
<feature type="strand" evidence="4">
    <location>
        <begin position="75"/>
        <end position="81"/>
    </location>
</feature>
<gene>
    <name evidence="1" type="primary">rpmA</name>
    <name type="ordered locus">PPA0829</name>
</gene>
<proteinExistence type="evidence at protein level"/>